<feature type="chain" id="PRO_1000004127" description="Protein PsbN">
    <location>
        <begin position="1"/>
        <end position="50"/>
    </location>
</feature>
<feature type="transmembrane region" description="Helical" evidence="1">
    <location>
        <begin position="14"/>
        <end position="34"/>
    </location>
</feature>
<comment type="function">
    <text evidence="1">May play a role in photosystem I and II biogenesis.</text>
</comment>
<comment type="subcellular location">
    <subcellularLocation>
        <location evidence="1">Cellular thylakoid membrane</location>
        <topology evidence="1">Single-pass membrane protein</topology>
    </subcellularLocation>
</comment>
<comment type="similarity">
    <text evidence="1">Belongs to the PsbN family.</text>
</comment>
<comment type="caution">
    <text evidence="1">Originally thought to be a component of PSII; based on experiments in Synechocystis, N.tabacum and barley, and its absence from PSII in T.elongatus and T.vulcanus, this is probably not true.</text>
</comment>
<accession>A2BUN3</accession>
<keyword id="KW-0472">Membrane</keyword>
<keyword id="KW-0793">Thylakoid</keyword>
<keyword id="KW-0812">Transmembrane</keyword>
<keyword id="KW-1133">Transmembrane helix</keyword>
<gene>
    <name evidence="1" type="primary">psbN</name>
    <name type="ordered locus">P9515_02851</name>
</gene>
<dbReference type="EMBL" id="CP000552">
    <property type="protein sequence ID" value="ABM71494.1"/>
    <property type="molecule type" value="Genomic_DNA"/>
</dbReference>
<dbReference type="RefSeq" id="WP_011819605.1">
    <property type="nucleotide sequence ID" value="NC_008817.1"/>
</dbReference>
<dbReference type="SMR" id="A2BUN3"/>
<dbReference type="STRING" id="167542.P9515_02851"/>
<dbReference type="GeneID" id="60200457"/>
<dbReference type="KEGG" id="pmc:P9515_02851"/>
<dbReference type="HOGENOM" id="CLU_205504_1_0_3"/>
<dbReference type="Proteomes" id="UP000001589">
    <property type="component" value="Chromosome"/>
</dbReference>
<dbReference type="GO" id="GO:0031676">
    <property type="term" value="C:plasma membrane-derived thylakoid membrane"/>
    <property type="evidence" value="ECO:0007669"/>
    <property type="project" value="UniProtKB-SubCell"/>
</dbReference>
<dbReference type="GO" id="GO:0015979">
    <property type="term" value="P:photosynthesis"/>
    <property type="evidence" value="ECO:0007669"/>
    <property type="project" value="InterPro"/>
</dbReference>
<dbReference type="HAMAP" id="MF_00293">
    <property type="entry name" value="PSII_PsbN"/>
    <property type="match status" value="1"/>
</dbReference>
<dbReference type="InterPro" id="IPR003398">
    <property type="entry name" value="PSII_PsbN"/>
</dbReference>
<dbReference type="NCBIfam" id="NF009650">
    <property type="entry name" value="PRK13183.1"/>
    <property type="match status" value="1"/>
</dbReference>
<dbReference type="Pfam" id="PF02468">
    <property type="entry name" value="PsbN"/>
    <property type="match status" value="1"/>
</dbReference>
<organism>
    <name type="scientific">Prochlorococcus marinus (strain MIT 9515)</name>
    <dbReference type="NCBI Taxonomy" id="167542"/>
    <lineage>
        <taxon>Bacteria</taxon>
        <taxon>Bacillati</taxon>
        <taxon>Cyanobacteriota</taxon>
        <taxon>Cyanophyceae</taxon>
        <taxon>Synechococcales</taxon>
        <taxon>Prochlorococcaceae</taxon>
        <taxon>Prochlorococcus</taxon>
    </lineage>
</organism>
<proteinExistence type="inferred from homology"/>
<reference key="1">
    <citation type="journal article" date="2007" name="PLoS Genet.">
        <title>Patterns and implications of gene gain and loss in the evolution of Prochlorococcus.</title>
        <authorList>
            <person name="Kettler G.C."/>
            <person name="Martiny A.C."/>
            <person name="Huang K."/>
            <person name="Zucker J."/>
            <person name="Coleman M.L."/>
            <person name="Rodrigue S."/>
            <person name="Chen F."/>
            <person name="Lapidus A."/>
            <person name="Ferriera S."/>
            <person name="Johnson J."/>
            <person name="Steglich C."/>
            <person name="Church G.M."/>
            <person name="Richardson P."/>
            <person name="Chisholm S.W."/>
        </authorList>
    </citation>
    <scope>NUCLEOTIDE SEQUENCE [LARGE SCALE GENOMIC DNA]</scope>
    <source>
        <strain>MIT 9515</strain>
    </source>
</reference>
<name>PSBN_PROM5</name>
<protein>
    <recommendedName>
        <fullName evidence="1">Protein PsbN</fullName>
    </recommendedName>
</protein>
<sequence>MQTLSSAPDPAVSVAVTILAVLLALTGFGLWTAFGPKATKLTDPWDDHDD</sequence>
<evidence type="ECO:0000255" key="1">
    <source>
        <dbReference type="HAMAP-Rule" id="MF_00293"/>
    </source>
</evidence>